<keyword id="KW-0209">Deafness</keyword>
<keyword id="KW-1010">Non-syndromic deafness</keyword>
<keyword id="KW-1267">Proteomics identification</keyword>
<keyword id="KW-1185">Reference proteome</keyword>
<feature type="chain" id="PRO_0000071978" description="Small muscular protein">
    <location>
        <begin position="1"/>
        <end position="88"/>
    </location>
</feature>
<feature type="region of interest" description="Disordered" evidence="2">
    <location>
        <begin position="22"/>
        <end position="66"/>
    </location>
</feature>
<feature type="sequence variant" id="VAR_087073" description="In MPD7; uncertain significance." evidence="6">
    <original>P</original>
    <variation>T</variation>
    <location>
        <position position="7"/>
    </location>
</feature>
<feature type="sequence variant" id="VAR_087074" description="In MPD7; uncertain significance." evidence="6">
    <original>A</original>
    <variation>V</variation>
    <location>
        <position position="13"/>
    </location>
</feature>
<feature type="sequence variant" id="VAR_087075" description="In MPD7; uncertain significance." evidence="6">
    <original>P</original>
    <variation>A</variation>
    <location>
        <position position="27"/>
    </location>
</feature>
<feature type="sequence variant" id="VAR_087076" description="In MPD7; uncertain significance." evidence="6">
    <original>S</original>
    <variation>N</variation>
    <location>
        <position position="78"/>
    </location>
</feature>
<accession>Q9UHP9</accession>
<accession>B1AWX2</accession>
<proteinExistence type="evidence at protein level"/>
<comment type="function">
    <text evidence="1">Plays a role in the regulatory network through which muscle cells coordinate their structural and functional states during growth, adaptation, and repair.</text>
</comment>
<comment type="tissue specificity">
    <text>Preferentially and abundantly expressed in heart and skeletal muscle.</text>
</comment>
<comment type="disease" evidence="3 4 5">
    <disease id="DI-03162">
        <name>Deafness, X-linked, 4</name>
        <acronym>DFNX4</acronym>
        <description>A non-syndromic form of sensorineural, progressive hearing loss with postlingual onset. In affected males, the auditory impairment affects initially high-frequency hearing. It later evolves to become severe to profound and affects all frequencies. Carrier females manifest moderate hearing impairment in the high frequencies.</description>
        <dbReference type="MIM" id="300066"/>
    </disease>
    <text>The disease is caused by variants affecting the gene represented in this entry.</text>
</comment>
<comment type="disease" evidence="6">
    <disease id="DI-06378">
        <name>Myopathy, distal, 7, adult-onset, X-linked</name>
        <acronym>MPD7</acronym>
        <description>An X-linked recessive, slowly progressive muscular disorder characterized by adult onset of distal muscle weakness predominantly, affecting the lower limbs. Some patients also have proximal muscle weakness. Histopathological and electron microscopic analysis of patient muscle biopsies reveals myopathic findings with rimmed vacuoles and the presence of sarcoplasmic inclusions, some with amyloid-like characteristics.</description>
        <dbReference type="MIM" id="301075"/>
    </disease>
    <text>The disease may be caused by variants affecting the gene represented in this entry.</text>
</comment>
<comment type="similarity">
    <text evidence="7">Belongs to the SMPX family.</text>
</comment>
<comment type="caution">
    <text evidence="7">It is uncertain whether Met-1 or Met-3 is the initiator.</text>
</comment>
<gene>
    <name type="primary">SMPX</name>
    <name type="synonym">SRMX</name>
</gene>
<protein>
    <recommendedName>
        <fullName>Small muscular protein</fullName>
    </recommendedName>
    <alternativeName>
        <fullName>Stretch-responsive skeletal muscle protein</fullName>
    </alternativeName>
</protein>
<reference key="1">
    <citation type="journal article" date="1999" name="Hum. Genet.">
        <title>Identification, mapping, and genomic structure of a novel X-chromosomal human gene (SMPX) encoding a small muscular protein.</title>
        <authorList>
            <person name="Patzak D."/>
            <person name="Zhuchenko O."/>
            <person name="Lee C.-C."/>
            <person name="Wehnert M."/>
        </authorList>
    </citation>
    <scope>NUCLEOTIDE SEQUENCE [MRNA]</scope>
</reference>
<reference key="2">
    <citation type="journal article" date="2001" name="Genomics">
        <title>Identification of a novel stretch-responsive skeletal muscle gene (Smpx).</title>
        <authorList>
            <person name="Kemp T.J."/>
            <person name="Sadusky T.J."/>
            <person name="Simon M."/>
            <person name="Brown R."/>
            <person name="Eastwood M."/>
            <person name="Sassoon D.A."/>
            <person name="Coulton G.R."/>
        </authorList>
    </citation>
    <scope>NUCLEOTIDE SEQUENCE [MRNA]</scope>
    <source>
        <tissue>Skeletal muscle</tissue>
    </source>
</reference>
<reference key="3">
    <citation type="journal article" date="2004" name="Nat. Genet.">
        <title>Complete sequencing and characterization of 21,243 full-length human cDNAs.</title>
        <authorList>
            <person name="Ota T."/>
            <person name="Suzuki Y."/>
            <person name="Nishikawa T."/>
            <person name="Otsuki T."/>
            <person name="Sugiyama T."/>
            <person name="Irie R."/>
            <person name="Wakamatsu A."/>
            <person name="Hayashi K."/>
            <person name="Sato H."/>
            <person name="Nagai K."/>
            <person name="Kimura K."/>
            <person name="Makita H."/>
            <person name="Sekine M."/>
            <person name="Obayashi M."/>
            <person name="Nishi T."/>
            <person name="Shibahara T."/>
            <person name="Tanaka T."/>
            <person name="Ishii S."/>
            <person name="Yamamoto J."/>
            <person name="Saito K."/>
            <person name="Kawai Y."/>
            <person name="Isono Y."/>
            <person name="Nakamura Y."/>
            <person name="Nagahari K."/>
            <person name="Murakami K."/>
            <person name="Yasuda T."/>
            <person name="Iwayanagi T."/>
            <person name="Wagatsuma M."/>
            <person name="Shiratori A."/>
            <person name="Sudo H."/>
            <person name="Hosoiri T."/>
            <person name="Kaku Y."/>
            <person name="Kodaira H."/>
            <person name="Kondo H."/>
            <person name="Sugawara M."/>
            <person name="Takahashi M."/>
            <person name="Kanda K."/>
            <person name="Yokoi T."/>
            <person name="Furuya T."/>
            <person name="Kikkawa E."/>
            <person name="Omura Y."/>
            <person name="Abe K."/>
            <person name="Kamihara K."/>
            <person name="Katsuta N."/>
            <person name="Sato K."/>
            <person name="Tanikawa M."/>
            <person name="Yamazaki M."/>
            <person name="Ninomiya K."/>
            <person name="Ishibashi T."/>
            <person name="Yamashita H."/>
            <person name="Murakawa K."/>
            <person name="Fujimori K."/>
            <person name="Tanai H."/>
            <person name="Kimata M."/>
            <person name="Watanabe M."/>
            <person name="Hiraoka S."/>
            <person name="Chiba Y."/>
            <person name="Ishida S."/>
            <person name="Ono Y."/>
            <person name="Takiguchi S."/>
            <person name="Watanabe S."/>
            <person name="Yosida M."/>
            <person name="Hotuta T."/>
            <person name="Kusano J."/>
            <person name="Kanehori K."/>
            <person name="Takahashi-Fujii A."/>
            <person name="Hara H."/>
            <person name="Tanase T.-O."/>
            <person name="Nomura Y."/>
            <person name="Togiya S."/>
            <person name="Komai F."/>
            <person name="Hara R."/>
            <person name="Takeuchi K."/>
            <person name="Arita M."/>
            <person name="Imose N."/>
            <person name="Musashino K."/>
            <person name="Yuuki H."/>
            <person name="Oshima A."/>
            <person name="Sasaki N."/>
            <person name="Aotsuka S."/>
            <person name="Yoshikawa Y."/>
            <person name="Matsunawa H."/>
            <person name="Ichihara T."/>
            <person name="Shiohata N."/>
            <person name="Sano S."/>
            <person name="Moriya S."/>
            <person name="Momiyama H."/>
            <person name="Satoh N."/>
            <person name="Takami S."/>
            <person name="Terashima Y."/>
            <person name="Suzuki O."/>
            <person name="Nakagawa S."/>
            <person name="Senoh A."/>
            <person name="Mizoguchi H."/>
            <person name="Goto Y."/>
            <person name="Shimizu F."/>
            <person name="Wakebe H."/>
            <person name="Hishigaki H."/>
            <person name="Watanabe T."/>
            <person name="Sugiyama A."/>
            <person name="Takemoto M."/>
            <person name="Kawakami B."/>
            <person name="Yamazaki M."/>
            <person name="Watanabe K."/>
            <person name="Kumagai A."/>
            <person name="Itakura S."/>
            <person name="Fukuzumi Y."/>
            <person name="Fujimori Y."/>
            <person name="Komiyama M."/>
            <person name="Tashiro H."/>
            <person name="Tanigami A."/>
            <person name="Fujiwara T."/>
            <person name="Ono T."/>
            <person name="Yamada K."/>
            <person name="Fujii Y."/>
            <person name="Ozaki K."/>
            <person name="Hirao M."/>
            <person name="Ohmori Y."/>
            <person name="Kawabata A."/>
            <person name="Hikiji T."/>
            <person name="Kobatake N."/>
            <person name="Inagaki H."/>
            <person name="Ikema Y."/>
            <person name="Okamoto S."/>
            <person name="Okitani R."/>
            <person name="Kawakami T."/>
            <person name="Noguchi S."/>
            <person name="Itoh T."/>
            <person name="Shigeta K."/>
            <person name="Senba T."/>
            <person name="Matsumura K."/>
            <person name="Nakajima Y."/>
            <person name="Mizuno T."/>
            <person name="Morinaga M."/>
            <person name="Sasaki M."/>
            <person name="Togashi T."/>
            <person name="Oyama M."/>
            <person name="Hata H."/>
            <person name="Watanabe M."/>
            <person name="Komatsu T."/>
            <person name="Mizushima-Sugano J."/>
            <person name="Satoh T."/>
            <person name="Shirai Y."/>
            <person name="Takahashi Y."/>
            <person name="Nakagawa K."/>
            <person name="Okumura K."/>
            <person name="Nagase T."/>
            <person name="Nomura N."/>
            <person name="Kikuchi H."/>
            <person name="Masuho Y."/>
            <person name="Yamashita R."/>
            <person name="Nakai K."/>
            <person name="Yada T."/>
            <person name="Nakamura Y."/>
            <person name="Ohara O."/>
            <person name="Isogai T."/>
            <person name="Sugano S."/>
        </authorList>
    </citation>
    <scope>NUCLEOTIDE SEQUENCE [LARGE SCALE MRNA]</scope>
    <source>
        <tissue>Cerebellum</tissue>
    </source>
</reference>
<reference key="4">
    <citation type="journal article" date="2005" name="Nature">
        <title>The DNA sequence of the human X chromosome.</title>
        <authorList>
            <person name="Ross M.T."/>
            <person name="Grafham D.V."/>
            <person name="Coffey A.J."/>
            <person name="Scherer S."/>
            <person name="McLay K."/>
            <person name="Muzny D."/>
            <person name="Platzer M."/>
            <person name="Howell G.R."/>
            <person name="Burrows C."/>
            <person name="Bird C.P."/>
            <person name="Frankish A."/>
            <person name="Lovell F.L."/>
            <person name="Howe K.L."/>
            <person name="Ashurst J.L."/>
            <person name="Fulton R.S."/>
            <person name="Sudbrak R."/>
            <person name="Wen G."/>
            <person name="Jones M.C."/>
            <person name="Hurles M.E."/>
            <person name="Andrews T.D."/>
            <person name="Scott C.E."/>
            <person name="Searle S."/>
            <person name="Ramser J."/>
            <person name="Whittaker A."/>
            <person name="Deadman R."/>
            <person name="Carter N.P."/>
            <person name="Hunt S.E."/>
            <person name="Chen R."/>
            <person name="Cree A."/>
            <person name="Gunaratne P."/>
            <person name="Havlak P."/>
            <person name="Hodgson A."/>
            <person name="Metzker M.L."/>
            <person name="Richards S."/>
            <person name="Scott G."/>
            <person name="Steffen D."/>
            <person name="Sodergren E."/>
            <person name="Wheeler D.A."/>
            <person name="Worley K.C."/>
            <person name="Ainscough R."/>
            <person name="Ambrose K.D."/>
            <person name="Ansari-Lari M.A."/>
            <person name="Aradhya S."/>
            <person name="Ashwell R.I."/>
            <person name="Babbage A.K."/>
            <person name="Bagguley C.L."/>
            <person name="Ballabio A."/>
            <person name="Banerjee R."/>
            <person name="Barker G.E."/>
            <person name="Barlow K.F."/>
            <person name="Barrett I.P."/>
            <person name="Bates K.N."/>
            <person name="Beare D.M."/>
            <person name="Beasley H."/>
            <person name="Beasley O."/>
            <person name="Beck A."/>
            <person name="Bethel G."/>
            <person name="Blechschmidt K."/>
            <person name="Brady N."/>
            <person name="Bray-Allen S."/>
            <person name="Bridgeman A.M."/>
            <person name="Brown A.J."/>
            <person name="Brown M.J."/>
            <person name="Bonnin D."/>
            <person name="Bruford E.A."/>
            <person name="Buhay C."/>
            <person name="Burch P."/>
            <person name="Burford D."/>
            <person name="Burgess J."/>
            <person name="Burrill W."/>
            <person name="Burton J."/>
            <person name="Bye J.M."/>
            <person name="Carder C."/>
            <person name="Carrel L."/>
            <person name="Chako J."/>
            <person name="Chapman J.C."/>
            <person name="Chavez D."/>
            <person name="Chen E."/>
            <person name="Chen G."/>
            <person name="Chen Y."/>
            <person name="Chen Z."/>
            <person name="Chinault C."/>
            <person name="Ciccodicola A."/>
            <person name="Clark S.Y."/>
            <person name="Clarke G."/>
            <person name="Clee C.M."/>
            <person name="Clegg S."/>
            <person name="Clerc-Blankenburg K."/>
            <person name="Clifford K."/>
            <person name="Cobley V."/>
            <person name="Cole C.G."/>
            <person name="Conquer J.S."/>
            <person name="Corby N."/>
            <person name="Connor R.E."/>
            <person name="David R."/>
            <person name="Davies J."/>
            <person name="Davis C."/>
            <person name="Davis J."/>
            <person name="Delgado O."/>
            <person name="Deshazo D."/>
            <person name="Dhami P."/>
            <person name="Ding Y."/>
            <person name="Dinh H."/>
            <person name="Dodsworth S."/>
            <person name="Draper H."/>
            <person name="Dugan-Rocha S."/>
            <person name="Dunham A."/>
            <person name="Dunn M."/>
            <person name="Durbin K.J."/>
            <person name="Dutta I."/>
            <person name="Eades T."/>
            <person name="Ellwood M."/>
            <person name="Emery-Cohen A."/>
            <person name="Errington H."/>
            <person name="Evans K.L."/>
            <person name="Faulkner L."/>
            <person name="Francis F."/>
            <person name="Frankland J."/>
            <person name="Fraser A.E."/>
            <person name="Galgoczy P."/>
            <person name="Gilbert J."/>
            <person name="Gill R."/>
            <person name="Gloeckner G."/>
            <person name="Gregory S.G."/>
            <person name="Gribble S."/>
            <person name="Griffiths C."/>
            <person name="Grocock R."/>
            <person name="Gu Y."/>
            <person name="Gwilliam R."/>
            <person name="Hamilton C."/>
            <person name="Hart E.A."/>
            <person name="Hawes A."/>
            <person name="Heath P.D."/>
            <person name="Heitmann K."/>
            <person name="Hennig S."/>
            <person name="Hernandez J."/>
            <person name="Hinzmann B."/>
            <person name="Ho S."/>
            <person name="Hoffs M."/>
            <person name="Howden P.J."/>
            <person name="Huckle E.J."/>
            <person name="Hume J."/>
            <person name="Hunt P.J."/>
            <person name="Hunt A.R."/>
            <person name="Isherwood J."/>
            <person name="Jacob L."/>
            <person name="Johnson D."/>
            <person name="Jones S."/>
            <person name="de Jong P.J."/>
            <person name="Joseph S.S."/>
            <person name="Keenan S."/>
            <person name="Kelly S."/>
            <person name="Kershaw J.K."/>
            <person name="Khan Z."/>
            <person name="Kioschis P."/>
            <person name="Klages S."/>
            <person name="Knights A.J."/>
            <person name="Kosiura A."/>
            <person name="Kovar-Smith C."/>
            <person name="Laird G.K."/>
            <person name="Langford C."/>
            <person name="Lawlor S."/>
            <person name="Leversha M."/>
            <person name="Lewis L."/>
            <person name="Liu W."/>
            <person name="Lloyd C."/>
            <person name="Lloyd D.M."/>
            <person name="Loulseged H."/>
            <person name="Loveland J.E."/>
            <person name="Lovell J.D."/>
            <person name="Lozado R."/>
            <person name="Lu J."/>
            <person name="Lyne R."/>
            <person name="Ma J."/>
            <person name="Maheshwari M."/>
            <person name="Matthews L.H."/>
            <person name="McDowall J."/>
            <person name="McLaren S."/>
            <person name="McMurray A."/>
            <person name="Meidl P."/>
            <person name="Meitinger T."/>
            <person name="Milne S."/>
            <person name="Miner G."/>
            <person name="Mistry S.L."/>
            <person name="Morgan M."/>
            <person name="Morris S."/>
            <person name="Mueller I."/>
            <person name="Mullikin J.C."/>
            <person name="Nguyen N."/>
            <person name="Nordsiek G."/>
            <person name="Nyakatura G."/>
            <person name="O'dell C.N."/>
            <person name="Okwuonu G."/>
            <person name="Palmer S."/>
            <person name="Pandian R."/>
            <person name="Parker D."/>
            <person name="Parrish J."/>
            <person name="Pasternak S."/>
            <person name="Patel D."/>
            <person name="Pearce A.V."/>
            <person name="Pearson D.M."/>
            <person name="Pelan S.E."/>
            <person name="Perez L."/>
            <person name="Porter K.M."/>
            <person name="Ramsey Y."/>
            <person name="Reichwald K."/>
            <person name="Rhodes S."/>
            <person name="Ridler K.A."/>
            <person name="Schlessinger D."/>
            <person name="Schueler M.G."/>
            <person name="Sehra H.K."/>
            <person name="Shaw-Smith C."/>
            <person name="Shen H."/>
            <person name="Sheridan E.M."/>
            <person name="Shownkeen R."/>
            <person name="Skuce C.D."/>
            <person name="Smith M.L."/>
            <person name="Sotheran E.C."/>
            <person name="Steingruber H.E."/>
            <person name="Steward C.A."/>
            <person name="Storey R."/>
            <person name="Swann R.M."/>
            <person name="Swarbreck D."/>
            <person name="Tabor P.E."/>
            <person name="Taudien S."/>
            <person name="Taylor T."/>
            <person name="Teague B."/>
            <person name="Thomas K."/>
            <person name="Thorpe A."/>
            <person name="Timms K."/>
            <person name="Tracey A."/>
            <person name="Trevanion S."/>
            <person name="Tromans A.C."/>
            <person name="d'Urso M."/>
            <person name="Verduzco D."/>
            <person name="Villasana D."/>
            <person name="Waldron L."/>
            <person name="Wall M."/>
            <person name="Wang Q."/>
            <person name="Warren J."/>
            <person name="Warry G.L."/>
            <person name="Wei X."/>
            <person name="West A."/>
            <person name="Whitehead S.L."/>
            <person name="Whiteley M.N."/>
            <person name="Wilkinson J.E."/>
            <person name="Willey D.L."/>
            <person name="Williams G."/>
            <person name="Williams L."/>
            <person name="Williamson A."/>
            <person name="Williamson H."/>
            <person name="Wilming L."/>
            <person name="Woodmansey R.L."/>
            <person name="Wray P.W."/>
            <person name="Yen J."/>
            <person name="Zhang J."/>
            <person name="Zhou J."/>
            <person name="Zoghbi H."/>
            <person name="Zorilla S."/>
            <person name="Buck D."/>
            <person name="Reinhardt R."/>
            <person name="Poustka A."/>
            <person name="Rosenthal A."/>
            <person name="Lehrach H."/>
            <person name="Meindl A."/>
            <person name="Minx P.J."/>
            <person name="Hillier L.W."/>
            <person name="Willard H.F."/>
            <person name="Wilson R.K."/>
            <person name="Waterston R.H."/>
            <person name="Rice C.M."/>
            <person name="Vaudin M."/>
            <person name="Coulson A."/>
            <person name="Nelson D.L."/>
            <person name="Weinstock G."/>
            <person name="Sulston J.E."/>
            <person name="Durbin R.M."/>
            <person name="Hubbard T."/>
            <person name="Gibbs R.A."/>
            <person name="Beck S."/>
            <person name="Rogers J."/>
            <person name="Bentley D.R."/>
        </authorList>
    </citation>
    <scope>NUCLEOTIDE SEQUENCE [LARGE SCALE GENOMIC DNA]</scope>
</reference>
<reference key="5">
    <citation type="submission" date="2005-07" db="EMBL/GenBank/DDBJ databases">
        <authorList>
            <person name="Mural R.J."/>
            <person name="Istrail S."/>
            <person name="Sutton G.G."/>
            <person name="Florea L."/>
            <person name="Halpern A.L."/>
            <person name="Mobarry C.M."/>
            <person name="Lippert R."/>
            <person name="Walenz B."/>
            <person name="Shatkay H."/>
            <person name="Dew I."/>
            <person name="Miller J.R."/>
            <person name="Flanigan M.J."/>
            <person name="Edwards N.J."/>
            <person name="Bolanos R."/>
            <person name="Fasulo D."/>
            <person name="Halldorsson B.V."/>
            <person name="Hannenhalli S."/>
            <person name="Turner R."/>
            <person name="Yooseph S."/>
            <person name="Lu F."/>
            <person name="Nusskern D.R."/>
            <person name="Shue B.C."/>
            <person name="Zheng X.H."/>
            <person name="Zhong F."/>
            <person name="Delcher A.L."/>
            <person name="Huson D.H."/>
            <person name="Kravitz S.A."/>
            <person name="Mouchard L."/>
            <person name="Reinert K."/>
            <person name="Remington K.A."/>
            <person name="Clark A.G."/>
            <person name="Waterman M.S."/>
            <person name="Eichler E.E."/>
            <person name="Adams M.D."/>
            <person name="Hunkapiller M.W."/>
            <person name="Myers E.W."/>
            <person name="Venter J.C."/>
        </authorList>
    </citation>
    <scope>NUCLEOTIDE SEQUENCE [LARGE SCALE GENOMIC DNA]</scope>
</reference>
<reference key="6">
    <citation type="journal article" date="2004" name="Genome Res.">
        <title>The status, quality, and expansion of the NIH full-length cDNA project: the Mammalian Gene Collection (MGC).</title>
        <authorList>
            <consortium name="The MGC Project Team"/>
        </authorList>
    </citation>
    <scope>NUCLEOTIDE SEQUENCE [LARGE SCALE MRNA]</scope>
    <source>
        <tissue>Skeletal muscle</tissue>
    </source>
</reference>
<reference key="7">
    <citation type="journal article" date="2011" name="Am. J. Hum. Genet.">
        <title>Nonsense mutations in SMPX, encoding a protein responsive to physical force, result in X-chromosomal hearing loss.</title>
        <authorList>
            <person name="Huebner A.K."/>
            <person name="Gandia M."/>
            <person name="Frommolt P."/>
            <person name="Maak A."/>
            <person name="Wicklein E.M."/>
            <person name="Thiele H."/>
            <person name="Altmuller J."/>
            <person name="Wagner F."/>
            <person name="Vinuela A."/>
            <person name="Aguirre L.A."/>
            <person name="Moreno F."/>
            <person name="Maier H."/>
            <person name="Rau I."/>
            <person name="Giesselmann S."/>
            <person name="Nurnberg G."/>
            <person name="Gal A."/>
            <person name="Nurnberg P."/>
            <person name="Hubner C.A."/>
            <person name="del Castillo I."/>
            <person name="Kurth I."/>
        </authorList>
    </citation>
    <scope>INVOLVEMENT IN DFNX4</scope>
</reference>
<reference key="8">
    <citation type="journal article" date="2011" name="Am. J. Hum. Genet.">
        <title>Next-generation sequencing identifies mutations of SMPX, which encodes the small muscle protein, X-linked, as a cause of progressive hearing impairment.</title>
        <authorList>
            <person name="Schraders M."/>
            <person name="Haas S.A."/>
            <person name="Weegerink N.J."/>
            <person name="Oostrik J."/>
            <person name="Hu H."/>
            <person name="Hoefsloot L.H."/>
            <person name="Kannan S."/>
            <person name="Huygen P.L."/>
            <person name="Pennings R.J."/>
            <person name="Admiraal R.J."/>
            <person name="Kalscheuer V.M."/>
            <person name="Kunst H.P."/>
            <person name="Kremer H."/>
        </authorList>
    </citation>
    <scope>INVOLVEMENT IN DFNX4</scope>
</reference>
<reference key="9">
    <citation type="journal article" date="2013" name="Hum. Mutat.">
        <title>A novel deletion in SMPX causes a rare form of X-linked progressive hearing loss in two families due to a founder effect.</title>
        <authorList>
            <person name="Abdelfatah N."/>
            <person name="Merner N."/>
            <person name="Houston J."/>
            <person name="Benteau T."/>
            <person name="Griffin A."/>
            <person name="Doucette L."/>
            <person name="Stockley T."/>
            <person name="Lauzon J.L."/>
            <person name="Young T.L."/>
        </authorList>
    </citation>
    <scope>INVOLVEMENT IN DFNX4</scope>
</reference>
<reference key="10">
    <citation type="journal article" date="2021" name="Acta Neuropathol.">
        <title>Missense mutations in small muscle protein X-linked (SMPX) cause distal myopathy with protein inclusions.</title>
        <authorList>
            <person name="Johari M."/>
            <person name="Sarparanta J."/>
            <person name="Vihola A."/>
            <person name="Jonson P.H."/>
            <person name="Savarese M."/>
            <person name="Jokela M."/>
            <person name="Torella A."/>
            <person name="Piluso G."/>
            <person name="Said E."/>
            <person name="Vella N."/>
            <person name="Cauchi M."/>
            <person name="Magot A."/>
            <person name="Magri F."/>
            <person name="Mauri E."/>
            <person name="Kornblum C."/>
            <person name="Reimann J."/>
            <person name="Stojkovic T."/>
            <person name="Romero N.B."/>
            <person name="Luque H."/>
            <person name="Huovinen S."/>
            <person name="Lahermo P."/>
            <person name="Donner K."/>
            <person name="Comi G.P."/>
            <person name="Nigro V."/>
            <person name="Hackman P."/>
            <person name="Udd B."/>
        </authorList>
    </citation>
    <scope>VARIANTS MPD7 THR-7; VAL-13; ALA-27 AND ASN-78</scope>
    <scope>INVOLVEMENT IN MPD7</scope>
</reference>
<sequence length="88" mass="9559">MNMSKQPVSNVRAIQANINIPMGAFRPGAGQPPRRKECTPEVEEGVPPTSDEEKKPIPGAKKLPGPAVNLSEIQNIKSELKYVPKAEQ</sequence>
<dbReference type="EMBL" id="AF129505">
    <property type="protein sequence ID" value="AAF19343.1"/>
    <property type="molecule type" value="mRNA"/>
</dbReference>
<dbReference type="EMBL" id="AJ250584">
    <property type="protein sequence ID" value="CAC08492.1"/>
    <property type="molecule type" value="mRNA"/>
</dbReference>
<dbReference type="EMBL" id="AK312134">
    <property type="protein sequence ID" value="BAG35070.1"/>
    <property type="molecule type" value="mRNA"/>
</dbReference>
<dbReference type="EMBL" id="AL772370">
    <property type="status" value="NOT_ANNOTATED_CDS"/>
    <property type="molecule type" value="Genomic_DNA"/>
</dbReference>
<dbReference type="EMBL" id="CH471074">
    <property type="protein sequence ID" value="EAW98980.1"/>
    <property type="molecule type" value="Genomic_DNA"/>
</dbReference>
<dbReference type="EMBL" id="BC005948">
    <property type="protein sequence ID" value="AAH05948.1"/>
    <property type="molecule type" value="mRNA"/>
</dbReference>
<dbReference type="CCDS" id="CCDS14200.1"/>
<dbReference type="RefSeq" id="NP_055147.1">
    <property type="nucleotide sequence ID" value="NM_014332.3"/>
</dbReference>
<dbReference type="RefSeq" id="XP_047297895.1">
    <property type="nucleotide sequence ID" value="XM_047441939.1"/>
</dbReference>
<dbReference type="RefSeq" id="XP_047297896.1">
    <property type="nucleotide sequence ID" value="XM_047441940.1"/>
</dbReference>
<dbReference type="RefSeq" id="XP_054182708.1">
    <property type="nucleotide sequence ID" value="XM_054326733.1"/>
</dbReference>
<dbReference type="BioGRID" id="117193">
    <property type="interactions" value="4"/>
</dbReference>
<dbReference type="FunCoup" id="Q9UHP9">
    <property type="interactions" value="10"/>
</dbReference>
<dbReference type="IntAct" id="Q9UHP9">
    <property type="interactions" value="3"/>
</dbReference>
<dbReference type="STRING" id="9606.ENSP00000368808"/>
<dbReference type="GlyGen" id="Q9UHP9">
    <property type="glycosylation" value="2 sites, 1 O-linked glycan (1 site)"/>
</dbReference>
<dbReference type="iPTMnet" id="Q9UHP9"/>
<dbReference type="PhosphoSitePlus" id="Q9UHP9"/>
<dbReference type="BioMuta" id="SMPX"/>
<dbReference type="MassIVE" id="Q9UHP9"/>
<dbReference type="PaxDb" id="9606-ENSP00000368808"/>
<dbReference type="PeptideAtlas" id="Q9UHP9"/>
<dbReference type="ProteomicsDB" id="84395"/>
<dbReference type="Antibodypedia" id="24455">
    <property type="antibodies" value="95 antibodies from 23 providers"/>
</dbReference>
<dbReference type="DNASU" id="23676"/>
<dbReference type="Ensembl" id="ENST00000379494.4">
    <property type="protein sequence ID" value="ENSP00000368808.3"/>
    <property type="gene ID" value="ENSG00000091482.8"/>
</dbReference>
<dbReference type="Ensembl" id="ENST00000494525.1">
    <property type="protein sequence ID" value="ENSP00000495170.1"/>
    <property type="gene ID" value="ENSG00000091482.8"/>
</dbReference>
<dbReference type="Ensembl" id="ENST00000646008.1">
    <property type="protein sequence ID" value="ENSP00000493671.1"/>
    <property type="gene ID" value="ENSG00000091482.8"/>
</dbReference>
<dbReference type="GeneID" id="23676"/>
<dbReference type="KEGG" id="hsa:23676"/>
<dbReference type="MANE-Select" id="ENST00000379494.4">
    <property type="protein sequence ID" value="ENSP00000368808.3"/>
    <property type="RefSeq nucleotide sequence ID" value="NM_014332.3"/>
    <property type="RefSeq protein sequence ID" value="NP_055147.1"/>
</dbReference>
<dbReference type="UCSC" id="uc004daa.4">
    <property type="organism name" value="human"/>
</dbReference>
<dbReference type="AGR" id="HGNC:11122"/>
<dbReference type="CTD" id="23676"/>
<dbReference type="DisGeNET" id="23676"/>
<dbReference type="GeneCards" id="SMPX"/>
<dbReference type="GeneReviews" id="SMPX"/>
<dbReference type="HGNC" id="HGNC:11122">
    <property type="gene designation" value="SMPX"/>
</dbReference>
<dbReference type="HPA" id="ENSG00000091482">
    <property type="expression patterns" value="Group enriched (heart muscle, skeletal muscle, tongue)"/>
</dbReference>
<dbReference type="MalaCards" id="SMPX"/>
<dbReference type="MIM" id="300066">
    <property type="type" value="phenotype"/>
</dbReference>
<dbReference type="MIM" id="300226">
    <property type="type" value="gene"/>
</dbReference>
<dbReference type="MIM" id="301075">
    <property type="type" value="phenotype"/>
</dbReference>
<dbReference type="neXtProt" id="NX_Q9UHP9"/>
<dbReference type="OpenTargets" id="ENSG00000091482"/>
<dbReference type="Orphanet" id="90625">
    <property type="disease" value="Rare X-linked non-syndromic sensorineural deafness type DFN"/>
</dbReference>
<dbReference type="PharmGKB" id="PA35971"/>
<dbReference type="VEuPathDB" id="HostDB:ENSG00000091482"/>
<dbReference type="eggNOG" id="ENOG502S62J">
    <property type="taxonomic scope" value="Eukaryota"/>
</dbReference>
<dbReference type="GeneTree" id="ENSGT00390000017542"/>
<dbReference type="HOGENOM" id="CLU_2512070_0_0_1"/>
<dbReference type="InParanoid" id="Q9UHP9"/>
<dbReference type="OMA" id="PPRKKEC"/>
<dbReference type="OrthoDB" id="8868927at2759"/>
<dbReference type="PAN-GO" id="Q9UHP9">
    <property type="GO annotations" value="3 GO annotations based on evolutionary models"/>
</dbReference>
<dbReference type="PhylomeDB" id="Q9UHP9"/>
<dbReference type="TreeFam" id="TF338181"/>
<dbReference type="PathwayCommons" id="Q9UHP9"/>
<dbReference type="SignaLink" id="Q9UHP9"/>
<dbReference type="BioGRID-ORCS" id="23676">
    <property type="hits" value="11 hits in 768 CRISPR screens"/>
</dbReference>
<dbReference type="GenomeRNAi" id="23676"/>
<dbReference type="Pharos" id="Q9UHP9">
    <property type="development level" value="Tbio"/>
</dbReference>
<dbReference type="PRO" id="PR:Q9UHP9"/>
<dbReference type="Proteomes" id="UP000005640">
    <property type="component" value="Chromosome X"/>
</dbReference>
<dbReference type="RNAct" id="Q9UHP9">
    <property type="molecule type" value="protein"/>
</dbReference>
<dbReference type="Bgee" id="ENSG00000091482">
    <property type="expression patterns" value="Expressed in heart right ventricle and 122 other cell types or tissues"/>
</dbReference>
<dbReference type="ExpressionAtlas" id="Q9UHP9">
    <property type="expression patterns" value="baseline and differential"/>
</dbReference>
<dbReference type="GO" id="GO:0043034">
    <property type="term" value="C:costamere"/>
    <property type="evidence" value="ECO:0000318"/>
    <property type="project" value="GO_Central"/>
</dbReference>
<dbReference type="GO" id="GO:0031430">
    <property type="term" value="C:M band"/>
    <property type="evidence" value="ECO:0000318"/>
    <property type="project" value="GO_Central"/>
</dbReference>
<dbReference type="GO" id="GO:0005927">
    <property type="term" value="C:muscle tendon junction"/>
    <property type="evidence" value="ECO:0000318"/>
    <property type="project" value="GO_Central"/>
</dbReference>
<dbReference type="GO" id="GO:0005634">
    <property type="term" value="C:nucleus"/>
    <property type="evidence" value="ECO:0007669"/>
    <property type="project" value="Ensembl"/>
</dbReference>
<dbReference type="GO" id="GO:0006941">
    <property type="term" value="P:striated muscle contraction"/>
    <property type="evidence" value="ECO:0000304"/>
    <property type="project" value="ProtInc"/>
</dbReference>
<dbReference type="InterPro" id="IPR029268">
    <property type="entry name" value="Chisel"/>
</dbReference>
<dbReference type="PANTHER" id="PTHR17416">
    <property type="entry name" value="SMALL MUSCULAR PROTEIN"/>
    <property type="match status" value="1"/>
</dbReference>
<dbReference type="PANTHER" id="PTHR17416:SF0">
    <property type="entry name" value="SMALL MUSCULAR PROTEIN"/>
    <property type="match status" value="1"/>
</dbReference>
<dbReference type="Pfam" id="PF15355">
    <property type="entry name" value="Chisel"/>
    <property type="match status" value="1"/>
</dbReference>
<name>SMPX_HUMAN</name>
<evidence type="ECO:0000250" key="1"/>
<evidence type="ECO:0000256" key="2">
    <source>
        <dbReference type="SAM" id="MobiDB-lite"/>
    </source>
</evidence>
<evidence type="ECO:0000269" key="3">
    <source>
    </source>
</evidence>
<evidence type="ECO:0000269" key="4">
    <source>
    </source>
</evidence>
<evidence type="ECO:0000269" key="5">
    <source>
    </source>
</evidence>
<evidence type="ECO:0000269" key="6">
    <source>
    </source>
</evidence>
<evidence type="ECO:0000305" key="7"/>
<organism>
    <name type="scientific">Homo sapiens</name>
    <name type="common">Human</name>
    <dbReference type="NCBI Taxonomy" id="9606"/>
    <lineage>
        <taxon>Eukaryota</taxon>
        <taxon>Metazoa</taxon>
        <taxon>Chordata</taxon>
        <taxon>Craniata</taxon>
        <taxon>Vertebrata</taxon>
        <taxon>Euteleostomi</taxon>
        <taxon>Mammalia</taxon>
        <taxon>Eutheria</taxon>
        <taxon>Euarchontoglires</taxon>
        <taxon>Primates</taxon>
        <taxon>Haplorrhini</taxon>
        <taxon>Catarrhini</taxon>
        <taxon>Hominidae</taxon>
        <taxon>Homo</taxon>
    </lineage>
</organism>